<protein>
    <recommendedName>
        <fullName evidence="1">ATP-dependent helicase/deoxyribonuclease subunit B</fullName>
        <ecNumber evidence="1">3.1.-.-</ecNumber>
    </recommendedName>
    <alternativeName>
        <fullName evidence="1">ATP-dependent helicase/nuclease subunit RexB</fullName>
    </alternativeName>
</protein>
<gene>
    <name evidence="1" type="primary">rexB</name>
    <name type="ordered locus">LCABL_17120</name>
</gene>
<dbReference type="EC" id="3.1.-.-" evidence="1"/>
<dbReference type="EMBL" id="FM177140">
    <property type="protein sequence ID" value="CAQ66793.1"/>
    <property type="molecule type" value="Genomic_DNA"/>
</dbReference>
<dbReference type="SMR" id="B3WEJ2"/>
<dbReference type="KEGG" id="lcb:LCABL_17120"/>
<dbReference type="HOGENOM" id="CLU_007838_0_0_9"/>
<dbReference type="GO" id="GO:0008409">
    <property type="term" value="F:5'-3' exonuclease activity"/>
    <property type="evidence" value="ECO:0007669"/>
    <property type="project" value="UniProtKB-UniRule"/>
</dbReference>
<dbReference type="GO" id="GO:0005524">
    <property type="term" value="F:ATP binding"/>
    <property type="evidence" value="ECO:0007669"/>
    <property type="project" value="UniProtKB-UniRule"/>
</dbReference>
<dbReference type="GO" id="GO:0003690">
    <property type="term" value="F:double-stranded DNA binding"/>
    <property type="evidence" value="ECO:0007669"/>
    <property type="project" value="UniProtKB-UniRule"/>
</dbReference>
<dbReference type="GO" id="GO:0004386">
    <property type="term" value="F:helicase activity"/>
    <property type="evidence" value="ECO:0007669"/>
    <property type="project" value="UniProtKB-KW"/>
</dbReference>
<dbReference type="GO" id="GO:0016817">
    <property type="term" value="F:hydrolase activity, acting on acid anhydrides"/>
    <property type="evidence" value="ECO:0007669"/>
    <property type="project" value="InterPro"/>
</dbReference>
<dbReference type="GO" id="GO:0000724">
    <property type="term" value="P:double-strand break repair via homologous recombination"/>
    <property type="evidence" value="ECO:0007669"/>
    <property type="project" value="UniProtKB-UniRule"/>
</dbReference>
<dbReference type="Gene3D" id="3.90.320.10">
    <property type="match status" value="1"/>
</dbReference>
<dbReference type="Gene3D" id="3.40.50.300">
    <property type="entry name" value="P-loop containing nucleotide triphosphate hydrolases"/>
    <property type="match status" value="3"/>
</dbReference>
<dbReference type="HAMAP" id="MF_01453">
    <property type="entry name" value="AddB_type2"/>
    <property type="match status" value="1"/>
</dbReference>
<dbReference type="InterPro" id="IPR049035">
    <property type="entry name" value="ADDB_N"/>
</dbReference>
<dbReference type="InterPro" id="IPR014141">
    <property type="entry name" value="DNA_helicase_suRexB"/>
</dbReference>
<dbReference type="InterPro" id="IPR027417">
    <property type="entry name" value="P-loop_NTPase"/>
</dbReference>
<dbReference type="InterPro" id="IPR011604">
    <property type="entry name" value="PDDEXK-like_dom_sf"/>
</dbReference>
<dbReference type="InterPro" id="IPR038726">
    <property type="entry name" value="PDDEXK_AddAB-type"/>
</dbReference>
<dbReference type="PANTHER" id="PTHR30591">
    <property type="entry name" value="RECBCD ENZYME SUBUNIT RECC"/>
    <property type="match status" value="1"/>
</dbReference>
<dbReference type="PANTHER" id="PTHR30591:SF1">
    <property type="entry name" value="RECBCD ENZYME SUBUNIT RECC"/>
    <property type="match status" value="1"/>
</dbReference>
<dbReference type="Pfam" id="PF21445">
    <property type="entry name" value="ADDB_N"/>
    <property type="match status" value="1"/>
</dbReference>
<dbReference type="Pfam" id="PF12705">
    <property type="entry name" value="PDDEXK_1"/>
    <property type="match status" value="1"/>
</dbReference>
<dbReference type="SUPFAM" id="SSF52540">
    <property type="entry name" value="P-loop containing nucleoside triphosphate hydrolases"/>
    <property type="match status" value="1"/>
</dbReference>
<evidence type="ECO:0000255" key="1">
    <source>
        <dbReference type="HAMAP-Rule" id="MF_01453"/>
    </source>
</evidence>
<feature type="chain" id="PRO_0000379368" description="ATP-dependent helicase/deoxyribonuclease subunit B">
    <location>
        <begin position="1"/>
        <end position="1179"/>
    </location>
</feature>
<reference key="1">
    <citation type="submission" date="2008-06" db="EMBL/GenBank/DDBJ databases">
        <title>Lactobacillus casei BL23 complete genome sequence.</title>
        <authorList>
            <person name="Maze A."/>
            <person name="Boel G."/>
            <person name="Bourand A."/>
            <person name="Loux V."/>
            <person name="Gibrat J.F."/>
            <person name="Zuniga M."/>
            <person name="Hartke A."/>
            <person name="Deutscher J."/>
        </authorList>
    </citation>
    <scope>NUCLEOTIDE SEQUENCE [LARGE SCALE GENOMIC DNA]</scope>
    <source>
        <strain>BL23</strain>
    </source>
</reference>
<name>ADDB_LACCB</name>
<proteinExistence type="inferred from homology"/>
<keyword id="KW-0067">ATP-binding</keyword>
<keyword id="KW-0227">DNA damage</keyword>
<keyword id="KW-0234">DNA repair</keyword>
<keyword id="KW-0238">DNA-binding</keyword>
<keyword id="KW-0269">Exonuclease</keyword>
<keyword id="KW-0347">Helicase</keyword>
<keyword id="KW-0378">Hydrolase</keyword>
<keyword id="KW-0540">Nuclease</keyword>
<keyword id="KW-0547">Nucleotide-binding</keyword>
<accession>B3WEJ2</accession>
<organism>
    <name type="scientific">Lacticaseibacillus casei (strain BL23)</name>
    <name type="common">Lactobacillus casei</name>
    <dbReference type="NCBI Taxonomy" id="543734"/>
    <lineage>
        <taxon>Bacteria</taxon>
        <taxon>Bacillati</taxon>
        <taxon>Bacillota</taxon>
        <taxon>Bacilli</taxon>
        <taxon>Lactobacillales</taxon>
        <taxon>Lactobacillaceae</taxon>
        <taxon>Lacticaseibacillus</taxon>
    </lineage>
</organism>
<sequence>MGLQFILGDATTDHAGTMATMVQANLQADSQNQIFYLVPNHIKFEAEVDLLKRLRAQAASVNGVYAQNRVQVLSFSRLAWYFLKNTALYQQPRLDRASNTMLVAKILGESKEELTIYAGEAHNTGFVTQLADQLSELVTGRITAEDLNTTVAALTPGDRHRAKLRDLGIILDHYEAEIGPYATNASLLSGLQQVMRNQDLSHTFIYLNDFNVFSASETGLVETMIETAAEVTVSLVLNKPYPAAPPVAPNLFLPAGRLYHRLYQKAKTMKVPIRLDRFAKPRPLSEGMNHLADWWQTSTNLQPQAPAQTAQNKEVELAVATDPYHELRTVARQIYQAVRQGARYRDFLILARRLDPYAAVIPAIFEEFNIPQFTDLERPMKDHPLVVLIESLFAIQDHDYQYQDVMRLLHTELLLPENMDIAAFRDALDTTDNHLVRTGITGKKRWTQTDPWRYFQRNPNADDSQLDPEADKTAQINAIKTLVADTVPQLLRQWQTAKTGREAAASLYQWLQTTGVIDQLNVWRQTANADGDLSRSQANEQAWDTFTQLLNDYATILGEADFNRDQFRELLAAGFASATYTQIPSTLDSVVISETGLVRLAKAKHVYVIGATNTAMPDVPNDSGVLNSEERQLLAAQLPDDRFLPEQGPTTTLGDPFINYLGFMAASEKLTLSYPMQNTQENSENQASPYFRQLAQALQLTPATWAPAGLGTSLKAVLGSPRAMLSDFVRAAGEAQHQKLPLSRSWQGVLASLKQTKLAPLAQKLAGSLTYQNNPGRLDPTLAVQLYGRDMNVSVSRLETYYRNQFEYFLKYGLLLQPRPEFELSPADTGSLFHAVLDQYLTQLRDAGQTLADVTAADVAAAVPPLVAAITKRPGYEILGSTHRMAYLTSRLSRLLIQVLTNMRQQQRRTGFRPMRTELQFGQIGDTRGLPGLSWPLPHGGRVNVRGKIDRLDVYRESDAQRFMVVDYKSTQHRFDDSDAYYGIALQMLTYVEAMANVPADPPFVPAGALYFHLQDPKFKFSTDLDLDIDRLKAFKYLGFLVAKDGADLAAVDKTISAETGGRSMMVPLGFKKDGAFNYNQSNILTPEDLSAYLLHNQALIIDAASRILAGDIALAPFQYGQESTVISNSDYQSIMLFDPATGFDHYNHVPKLKRKEVLGRVTTDPTQIPHHRQEDSQA</sequence>
<comment type="function">
    <text evidence="1">The heterodimer acts as both an ATP-dependent DNA helicase and an ATP-dependent, dual-direction single-stranded exonuclease. Recognizes the chi site generating a DNA molecule suitable for the initiation of homologous recombination. This subunit has 5' -&gt; 3' nuclease activity but not helicase activity.</text>
</comment>
<comment type="cofactor">
    <cofactor evidence="1">
        <name>Mg(2+)</name>
        <dbReference type="ChEBI" id="CHEBI:18420"/>
    </cofactor>
</comment>
<comment type="subunit">
    <text evidence="1">Heterodimer of AddA and RexB.</text>
</comment>
<comment type="miscellaneous">
    <text evidence="1">Despite having helicase-like domains, this subunit does not have helicase activity.</text>
</comment>
<comment type="similarity">
    <text evidence="1">Belongs to the helicase family. AddB/RexB type 2 subfamily.</text>
</comment>